<dbReference type="EMBL" id="CP000034">
    <property type="protein sequence ID" value="ABB63450.1"/>
    <property type="molecule type" value="Genomic_DNA"/>
</dbReference>
<dbReference type="RefSeq" id="WP_000135224.1">
    <property type="nucleotide sequence ID" value="NC_007606.1"/>
</dbReference>
<dbReference type="RefSeq" id="YP_404941.1">
    <property type="nucleotide sequence ID" value="NC_007606.1"/>
</dbReference>
<dbReference type="SMR" id="Q32B55"/>
<dbReference type="STRING" id="300267.SDY_3472"/>
<dbReference type="EnsemblBacteria" id="ABB63450">
    <property type="protein sequence ID" value="ABB63450"/>
    <property type="gene ID" value="SDY_3472"/>
</dbReference>
<dbReference type="GeneID" id="93778691"/>
<dbReference type="KEGG" id="sdy:SDY_3472"/>
<dbReference type="PATRIC" id="fig|300267.13.peg.4125"/>
<dbReference type="HOGENOM" id="CLU_092403_0_2_6"/>
<dbReference type="Proteomes" id="UP000002716">
    <property type="component" value="Chromosome"/>
</dbReference>
<dbReference type="GO" id="GO:0015935">
    <property type="term" value="C:small ribosomal subunit"/>
    <property type="evidence" value="ECO:0007669"/>
    <property type="project" value="InterPro"/>
</dbReference>
<dbReference type="GO" id="GO:0019843">
    <property type="term" value="F:rRNA binding"/>
    <property type="evidence" value="ECO:0007669"/>
    <property type="project" value="UniProtKB-UniRule"/>
</dbReference>
<dbReference type="GO" id="GO:0003735">
    <property type="term" value="F:structural constituent of ribosome"/>
    <property type="evidence" value="ECO:0007669"/>
    <property type="project" value="InterPro"/>
</dbReference>
<dbReference type="GO" id="GO:0042274">
    <property type="term" value="P:ribosomal small subunit biogenesis"/>
    <property type="evidence" value="ECO:0007669"/>
    <property type="project" value="TreeGrafter"/>
</dbReference>
<dbReference type="GO" id="GO:0006412">
    <property type="term" value="P:translation"/>
    <property type="evidence" value="ECO:0007669"/>
    <property type="project" value="UniProtKB-UniRule"/>
</dbReference>
<dbReference type="CDD" id="cd00165">
    <property type="entry name" value="S4"/>
    <property type="match status" value="1"/>
</dbReference>
<dbReference type="FunFam" id="1.10.1050.10:FF:000001">
    <property type="entry name" value="30S ribosomal protein S4"/>
    <property type="match status" value="1"/>
</dbReference>
<dbReference type="FunFam" id="3.10.290.10:FF:000001">
    <property type="entry name" value="30S ribosomal protein S4"/>
    <property type="match status" value="1"/>
</dbReference>
<dbReference type="Gene3D" id="1.10.1050.10">
    <property type="entry name" value="Ribosomal Protein S4 Delta 41, Chain A, domain 1"/>
    <property type="match status" value="1"/>
</dbReference>
<dbReference type="Gene3D" id="3.10.290.10">
    <property type="entry name" value="RNA-binding S4 domain"/>
    <property type="match status" value="1"/>
</dbReference>
<dbReference type="HAMAP" id="MF_01306_B">
    <property type="entry name" value="Ribosomal_uS4_B"/>
    <property type="match status" value="1"/>
</dbReference>
<dbReference type="InterPro" id="IPR022801">
    <property type="entry name" value="Ribosomal_uS4"/>
</dbReference>
<dbReference type="InterPro" id="IPR005709">
    <property type="entry name" value="Ribosomal_uS4_bac-type"/>
</dbReference>
<dbReference type="InterPro" id="IPR018079">
    <property type="entry name" value="Ribosomal_uS4_CS"/>
</dbReference>
<dbReference type="InterPro" id="IPR001912">
    <property type="entry name" value="Ribosomal_uS4_N"/>
</dbReference>
<dbReference type="InterPro" id="IPR002942">
    <property type="entry name" value="S4_RNA-bd"/>
</dbReference>
<dbReference type="InterPro" id="IPR036986">
    <property type="entry name" value="S4_RNA-bd_sf"/>
</dbReference>
<dbReference type="NCBIfam" id="NF003717">
    <property type="entry name" value="PRK05327.1"/>
    <property type="match status" value="1"/>
</dbReference>
<dbReference type="NCBIfam" id="TIGR01017">
    <property type="entry name" value="rpsD_bact"/>
    <property type="match status" value="1"/>
</dbReference>
<dbReference type="PANTHER" id="PTHR11831">
    <property type="entry name" value="30S 40S RIBOSOMAL PROTEIN"/>
    <property type="match status" value="1"/>
</dbReference>
<dbReference type="PANTHER" id="PTHR11831:SF4">
    <property type="entry name" value="SMALL RIBOSOMAL SUBUNIT PROTEIN US4M"/>
    <property type="match status" value="1"/>
</dbReference>
<dbReference type="Pfam" id="PF00163">
    <property type="entry name" value="Ribosomal_S4"/>
    <property type="match status" value="1"/>
</dbReference>
<dbReference type="Pfam" id="PF01479">
    <property type="entry name" value="S4"/>
    <property type="match status" value="1"/>
</dbReference>
<dbReference type="SMART" id="SM01390">
    <property type="entry name" value="Ribosomal_S4"/>
    <property type="match status" value="1"/>
</dbReference>
<dbReference type="SMART" id="SM00363">
    <property type="entry name" value="S4"/>
    <property type="match status" value="1"/>
</dbReference>
<dbReference type="SUPFAM" id="SSF55174">
    <property type="entry name" value="Alpha-L RNA-binding motif"/>
    <property type="match status" value="1"/>
</dbReference>
<dbReference type="PROSITE" id="PS00632">
    <property type="entry name" value="RIBOSOMAL_S4"/>
    <property type="match status" value="1"/>
</dbReference>
<dbReference type="PROSITE" id="PS50889">
    <property type="entry name" value="S4"/>
    <property type="match status" value="1"/>
</dbReference>
<gene>
    <name evidence="1" type="primary">rpsD</name>
    <name type="ordered locus">SDY_3472</name>
</gene>
<protein>
    <recommendedName>
        <fullName evidence="1">Small ribosomal subunit protein uS4</fullName>
    </recommendedName>
    <alternativeName>
        <fullName evidence="2">30S ribosomal protein S4</fullName>
    </alternativeName>
</protein>
<accession>Q32B55</accession>
<proteinExistence type="inferred from homology"/>
<sequence length="206" mass="23469">MARYLGPKLKLSRREGTDLFLKSGVRAIDTKCKIEQAPGQHGARKPRLSDYGVQLREKQKVRRIYGVLERQFRNYYKEAARLKGNTGENLLALLEGRLDNVVYRMGFGATRAEARQLVSHKAIMVNGRVVNIASYQVSPNDVVSIREKAKKQSRVKAALELAEQREKPTWLEVDAGKMEGTFKRKPERSDLSADINEHLIVELYSK</sequence>
<name>RS4_SHIDS</name>
<feature type="chain" id="PRO_0000228925" description="Small ribosomal subunit protein uS4">
    <location>
        <begin position="1"/>
        <end position="206"/>
    </location>
</feature>
<feature type="domain" description="S4 RNA-binding" evidence="1">
    <location>
        <begin position="96"/>
        <end position="156"/>
    </location>
</feature>
<evidence type="ECO:0000255" key="1">
    <source>
        <dbReference type="HAMAP-Rule" id="MF_01306"/>
    </source>
</evidence>
<evidence type="ECO:0000305" key="2"/>
<comment type="function">
    <text evidence="1">One of the primary rRNA binding proteins, it binds directly to 16S rRNA where it nucleates assembly of the body of the 30S subunit.</text>
</comment>
<comment type="function">
    <text evidence="1">With S5 and S12 plays an important role in translational accuracy.</text>
</comment>
<comment type="subunit">
    <text evidence="1">Part of the 30S ribosomal subunit. Contacts protein S5. The interaction surface between S4 and S5 is involved in control of translational fidelity.</text>
</comment>
<comment type="similarity">
    <text evidence="1">Belongs to the universal ribosomal protein uS4 family.</text>
</comment>
<reference key="1">
    <citation type="journal article" date="2005" name="Nucleic Acids Res.">
        <title>Genome dynamics and diversity of Shigella species, the etiologic agents of bacillary dysentery.</title>
        <authorList>
            <person name="Yang F."/>
            <person name="Yang J."/>
            <person name="Zhang X."/>
            <person name="Chen L."/>
            <person name="Jiang Y."/>
            <person name="Yan Y."/>
            <person name="Tang X."/>
            <person name="Wang J."/>
            <person name="Xiong Z."/>
            <person name="Dong J."/>
            <person name="Xue Y."/>
            <person name="Zhu Y."/>
            <person name="Xu X."/>
            <person name="Sun L."/>
            <person name="Chen S."/>
            <person name="Nie H."/>
            <person name="Peng J."/>
            <person name="Xu J."/>
            <person name="Wang Y."/>
            <person name="Yuan Z."/>
            <person name="Wen Y."/>
            <person name="Yao Z."/>
            <person name="Shen Y."/>
            <person name="Qiang B."/>
            <person name="Hou Y."/>
            <person name="Yu J."/>
            <person name="Jin Q."/>
        </authorList>
    </citation>
    <scope>NUCLEOTIDE SEQUENCE [LARGE SCALE GENOMIC DNA]</scope>
    <source>
        <strain>Sd197</strain>
    </source>
</reference>
<keyword id="KW-1185">Reference proteome</keyword>
<keyword id="KW-0687">Ribonucleoprotein</keyword>
<keyword id="KW-0689">Ribosomal protein</keyword>
<keyword id="KW-0694">RNA-binding</keyword>
<keyword id="KW-0699">rRNA-binding</keyword>
<organism>
    <name type="scientific">Shigella dysenteriae serotype 1 (strain Sd197)</name>
    <dbReference type="NCBI Taxonomy" id="300267"/>
    <lineage>
        <taxon>Bacteria</taxon>
        <taxon>Pseudomonadati</taxon>
        <taxon>Pseudomonadota</taxon>
        <taxon>Gammaproteobacteria</taxon>
        <taxon>Enterobacterales</taxon>
        <taxon>Enterobacteriaceae</taxon>
        <taxon>Shigella</taxon>
    </lineage>
</organism>